<keyword id="KW-1185">Reference proteome</keyword>
<keyword id="KW-0946">Virion</keyword>
<evidence type="ECO:0000256" key="1">
    <source>
        <dbReference type="SAM" id="MobiDB-lite"/>
    </source>
</evidence>
<evidence type="ECO:0000269" key="2">
    <source>
    </source>
</evidence>
<gene>
    <name type="ordered locus">MIMI_R610</name>
</gene>
<sequence>MTSCNYQPSEWPGDESWARLNNNQYDKVGFLEGVYDEYTKNKEPVELKFAGVYSLGSPNNFFRVTPSPVPVPTPMSVPRNVPRNVPTPAAPTPVTLTYRVPVTHSVPVTTEVPVTHTIATQPVMQTVPVMTQTVPVVTVHDSSPVAHVQVPNVIEGFEPLEISGRGGNTRPNFGYDTRPTTRPTRPDFGSDIGFGTRPHPRPPSPRPPSPRPPHPRPPSPRPPHPRPPSPRPRPRPQPDRNWWSNRPRPHPWGPGPVIRRSWPNVYGFPIWFNQPMNSFPLGWDIITAREIYPNIRVVKADGIDVATTMDYQPERLNVETVNNIIIRSYGFY</sequence>
<organismHost>
    <name type="scientific">Acanthamoeba polyphaga</name>
    <name type="common">Amoeba</name>
    <dbReference type="NCBI Taxonomy" id="5757"/>
</organismHost>
<protein>
    <recommendedName>
        <fullName>Uncharacterized protein R610</fullName>
    </recommendedName>
</protein>
<reference key="1">
    <citation type="journal article" date="2004" name="Science">
        <title>The 1.2-megabase genome sequence of Mimivirus.</title>
        <authorList>
            <person name="Raoult D."/>
            <person name="Audic S."/>
            <person name="Robert C."/>
            <person name="Abergel C."/>
            <person name="Renesto P."/>
            <person name="Ogata H."/>
            <person name="La Scola B."/>
            <person name="Susan M."/>
            <person name="Claverie J.-M."/>
        </authorList>
    </citation>
    <scope>NUCLEOTIDE SEQUENCE [LARGE SCALE GENOMIC DNA]</scope>
    <source>
        <strain>Rowbotham-Bradford</strain>
    </source>
</reference>
<reference key="2">
    <citation type="journal article" date="2006" name="J. Virol.">
        <title>Mimivirus giant particles incorporate a large fraction of anonymous and unique gene products.</title>
        <authorList>
            <person name="Renesto P."/>
            <person name="Abergel C."/>
            <person name="Decloquement P."/>
            <person name="Moinier D."/>
            <person name="Azza S."/>
            <person name="Ogata H."/>
            <person name="Fourquet P."/>
            <person name="Gorvel J.-P."/>
            <person name="Claverie J.-M."/>
            <person name="Raoult D."/>
        </authorList>
    </citation>
    <scope>IDENTIFICATION BY MASS SPECTROMETRY [LARGE SCALE ANALYSIS]</scope>
    <scope>SUBCELLULAR LOCATION</scope>
</reference>
<name>YR610_MIMIV</name>
<organism>
    <name type="scientific">Acanthamoeba polyphaga mimivirus</name>
    <name type="common">APMV</name>
    <dbReference type="NCBI Taxonomy" id="212035"/>
    <lineage>
        <taxon>Viruses</taxon>
        <taxon>Varidnaviria</taxon>
        <taxon>Bamfordvirae</taxon>
        <taxon>Nucleocytoviricota</taxon>
        <taxon>Megaviricetes</taxon>
        <taxon>Imitervirales</taxon>
        <taxon>Mimiviridae</taxon>
        <taxon>Megamimivirinae</taxon>
        <taxon>Mimivirus</taxon>
        <taxon>Mimivirus bradfordmassiliense</taxon>
    </lineage>
</organism>
<accession>Q7T6X1</accession>
<comment type="subcellular location">
    <subcellularLocation>
        <location evidence="2">Virion</location>
    </subcellularLocation>
</comment>
<feature type="chain" id="PRO_0000253426" description="Uncharacterized protein R610">
    <location>
        <begin position="1"/>
        <end position="332"/>
    </location>
</feature>
<feature type="region of interest" description="Disordered" evidence="1">
    <location>
        <begin position="159"/>
        <end position="256"/>
    </location>
</feature>
<feature type="compositionally biased region" description="Pro residues" evidence="1">
    <location>
        <begin position="201"/>
        <end position="231"/>
    </location>
</feature>
<dbReference type="EMBL" id="AY653733">
    <property type="protein sequence ID" value="AAQ09589.2"/>
    <property type="molecule type" value="Genomic_DNA"/>
</dbReference>
<dbReference type="KEGG" id="vg:9925249"/>
<dbReference type="OrthoDB" id="32480at10239"/>
<dbReference type="Proteomes" id="UP000001134">
    <property type="component" value="Genome"/>
</dbReference>
<dbReference type="GO" id="GO:0044423">
    <property type="term" value="C:virion component"/>
    <property type="evidence" value="ECO:0007669"/>
    <property type="project" value="UniProtKB-KW"/>
</dbReference>
<proteinExistence type="evidence at protein level"/>